<feature type="chain" id="PRO_0000315700" description="Spermatogenesis- and oogenesis-specific basic helix-loop-helix-containing protein 2">
    <location>
        <begin position="1"/>
        <end position="425"/>
    </location>
</feature>
<feature type="domain" description="bHLH" evidence="3">
    <location>
        <begin position="201"/>
        <end position="252"/>
    </location>
</feature>
<feature type="splice variant" id="VSP_042423" description="In isoform 3." evidence="4">
    <original>MASSIICQEHCQISGQ</original>
    <variation>METLQESLNTLLKQLEEEKKTLESQVKYYALKLEQESKAYQKINNERRTYLAEMSQGSGLHQVSKRQQVDQLPRMQENLVKTLLLKEELDPLK</variation>
    <location>
        <begin position="1"/>
        <end position="16"/>
    </location>
</feature>
<feature type="splice variant" id="VSP_030652" description="In isoform 2." evidence="5">
    <original>ERIKYCCEQLR</original>
    <variation>LYRKHSSFCFW</variation>
    <location>
        <begin position="215"/>
        <end position="225"/>
    </location>
</feature>
<feature type="splice variant" id="VSP_030653" description="In isoform 2." evidence="5">
    <location>
        <begin position="226"/>
        <end position="425"/>
    </location>
</feature>
<feature type="sequence variant" id="VAR_038283" description="In dbSNP:rs12873478.">
    <original>S</original>
    <variation>L</variation>
    <location>
        <position position="14"/>
    </location>
</feature>
<feature type="sequence variant" id="VAR_038284" description="In dbSNP:rs2296968.">
    <original>A</original>
    <variation>T</variation>
    <location>
        <position position="339"/>
    </location>
</feature>
<feature type="sequence conflict" description="In Ref. 1; BAA91175 and 5; AAW78547." evidence="6" ref="1 5">
    <original>K</original>
    <variation>N</variation>
    <location>
        <position position="211"/>
    </location>
</feature>
<feature type="sequence conflict" description="In Ref. 1; BAA91175 and 5; AAW78547." evidence="6" ref="1 5">
    <original>T</original>
    <variation>A</variation>
    <location>
        <position position="312"/>
    </location>
</feature>
<feature type="sequence conflict" description="In Ref. 1; BAA91175 and 5; AAW78547." evidence="6" ref="1 5">
    <original>H</original>
    <variation>Y</variation>
    <location>
        <position position="403"/>
    </location>
</feature>
<name>SOLH2_HUMAN</name>
<organism>
    <name type="scientific">Homo sapiens</name>
    <name type="common">Human</name>
    <dbReference type="NCBI Taxonomy" id="9606"/>
    <lineage>
        <taxon>Eukaryota</taxon>
        <taxon>Metazoa</taxon>
        <taxon>Chordata</taxon>
        <taxon>Craniata</taxon>
        <taxon>Vertebrata</taxon>
        <taxon>Euteleostomi</taxon>
        <taxon>Mammalia</taxon>
        <taxon>Eutheria</taxon>
        <taxon>Euarchontoglires</taxon>
        <taxon>Primates</taxon>
        <taxon>Haplorrhini</taxon>
        <taxon>Catarrhini</taxon>
        <taxon>Hominidae</taxon>
        <taxon>Homo</taxon>
    </lineage>
</organism>
<keyword id="KW-0025">Alternative splicing</keyword>
<keyword id="KW-0963">Cytoplasm</keyword>
<keyword id="KW-0217">Developmental protein</keyword>
<keyword id="KW-0221">Differentiation</keyword>
<keyword id="KW-0238">DNA-binding</keyword>
<keyword id="KW-0539">Nucleus</keyword>
<keyword id="KW-0896">Oogenesis</keyword>
<keyword id="KW-1267">Proteomics identification</keyword>
<keyword id="KW-1185">Reference proteome</keyword>
<keyword id="KW-0744">Spermatogenesis</keyword>
<keyword id="KW-0804">Transcription</keyword>
<keyword id="KW-0805">Transcription regulation</keyword>
<dbReference type="EMBL" id="AK000456">
    <property type="protein sequence ID" value="BAA91175.1"/>
    <property type="molecule type" value="mRNA"/>
</dbReference>
<dbReference type="EMBL" id="AK301863">
    <property type="protein sequence ID" value="BAG63302.1"/>
    <property type="molecule type" value="mRNA"/>
</dbReference>
<dbReference type="EMBL" id="AL139377">
    <property type="status" value="NOT_ANNOTATED_CDS"/>
    <property type="molecule type" value="Genomic_DNA"/>
</dbReference>
<dbReference type="EMBL" id="AL160392">
    <property type="status" value="NOT_ANNOTATED_CDS"/>
    <property type="molecule type" value="Genomic_DNA"/>
</dbReference>
<dbReference type="EMBL" id="CH471075">
    <property type="protein sequence ID" value="EAX08554.1"/>
    <property type="molecule type" value="Genomic_DNA"/>
</dbReference>
<dbReference type="EMBL" id="CH471075">
    <property type="protein sequence ID" value="EAX08555.1"/>
    <property type="molecule type" value="Genomic_DNA"/>
</dbReference>
<dbReference type="EMBL" id="BC025383">
    <property type="protein sequence ID" value="AAH25383.1"/>
    <property type="molecule type" value="mRNA"/>
</dbReference>
<dbReference type="EMBL" id="AY884305">
    <property type="protein sequence ID" value="AAW78547.1"/>
    <property type="molecule type" value="mRNA"/>
</dbReference>
<dbReference type="CCDS" id="CCDS61309.1">
    <molecule id="Q9NX45-2"/>
</dbReference>
<dbReference type="CCDS" id="CCDS9355.1">
    <molecule id="Q9NX45-1"/>
</dbReference>
<dbReference type="RefSeq" id="NP_001185839.1">
    <molecule id="Q9NX45-3"/>
    <property type="nucleotide sequence ID" value="NM_001198910.1"/>
</dbReference>
<dbReference type="RefSeq" id="NP_001269076.1">
    <molecule id="Q9NX45-2"/>
    <property type="nucleotide sequence ID" value="NM_001282147.2"/>
</dbReference>
<dbReference type="RefSeq" id="NP_060296.2">
    <molecule id="Q9NX45-1"/>
    <property type="nucleotide sequence ID" value="NM_017826.3"/>
</dbReference>
<dbReference type="SMR" id="Q9NX45"/>
<dbReference type="BioGRID" id="120277">
    <property type="interactions" value="1"/>
</dbReference>
<dbReference type="FunCoup" id="Q9NX45">
    <property type="interactions" value="832"/>
</dbReference>
<dbReference type="IntAct" id="Q9NX45">
    <property type="interactions" value="2"/>
</dbReference>
<dbReference type="STRING" id="9606.ENSP00000369210"/>
<dbReference type="GlyCosmos" id="Q9NX45">
    <property type="glycosylation" value="1 site, 1 glycan"/>
</dbReference>
<dbReference type="GlyGen" id="Q9NX45">
    <property type="glycosylation" value="1 site, 1 N-linked glycan (1 site)"/>
</dbReference>
<dbReference type="iPTMnet" id="Q9NX45"/>
<dbReference type="PhosphoSitePlus" id="Q9NX45"/>
<dbReference type="BioMuta" id="SOHLH2"/>
<dbReference type="DMDM" id="166200297"/>
<dbReference type="jPOST" id="Q9NX45"/>
<dbReference type="MassIVE" id="Q9NX45"/>
<dbReference type="PaxDb" id="9606-ENSP00000369210"/>
<dbReference type="PeptideAtlas" id="Q9NX45"/>
<dbReference type="ProteomicsDB" id="83036">
    <molecule id="Q9NX45-3"/>
</dbReference>
<dbReference type="Antibodypedia" id="34997">
    <property type="antibodies" value="154 antibodies from 18 providers"/>
</dbReference>
<dbReference type="DNASU" id="54937"/>
<dbReference type="Ensembl" id="ENST00000317764.6">
    <molecule id="Q9NX45-2"/>
    <property type="protein sequence ID" value="ENSP00000326838.6"/>
    <property type="gene ID" value="ENSG00000120669.16"/>
</dbReference>
<dbReference type="Ensembl" id="ENST00000379881.8">
    <molecule id="Q9NX45-1"/>
    <property type="protein sequence ID" value="ENSP00000369210.3"/>
    <property type="gene ID" value="ENSG00000120669.16"/>
</dbReference>
<dbReference type="GeneID" id="100526761"/>
<dbReference type="GeneID" id="54937"/>
<dbReference type="KEGG" id="hsa:100526761"/>
<dbReference type="KEGG" id="hsa:54937"/>
<dbReference type="MANE-Select" id="ENST00000379881.8">
    <property type="protein sequence ID" value="ENSP00000369210.3"/>
    <property type="RefSeq nucleotide sequence ID" value="NM_017826.3"/>
    <property type="RefSeq protein sequence ID" value="NP_060296.2"/>
</dbReference>
<dbReference type="UCSC" id="uc001uvj.3">
    <molecule id="Q9NX45-1"/>
    <property type="organism name" value="human"/>
</dbReference>
<dbReference type="AGR" id="HGNC:26026"/>
<dbReference type="AGR" id="HGNC:38866"/>
<dbReference type="CTD" id="100526761"/>
<dbReference type="CTD" id="54937"/>
<dbReference type="DisGeNET" id="54937"/>
<dbReference type="GeneCards" id="SOHLH2"/>
<dbReference type="HGNC" id="HGNC:26026">
    <property type="gene designation" value="SOHLH2"/>
</dbReference>
<dbReference type="HPA" id="ENSG00000120669">
    <property type="expression patterns" value="Tissue enriched (testis)"/>
</dbReference>
<dbReference type="MIM" id="616066">
    <property type="type" value="gene"/>
</dbReference>
<dbReference type="neXtProt" id="NX_Q9NX45"/>
<dbReference type="OpenTargets" id="ENSG00000120669"/>
<dbReference type="OpenTargets" id="ENSG00000250709"/>
<dbReference type="PharmGKB" id="PA144596273"/>
<dbReference type="VEuPathDB" id="HostDB:ENSG00000120669"/>
<dbReference type="eggNOG" id="ENOG502S71C">
    <property type="taxonomic scope" value="Eukaryota"/>
</dbReference>
<dbReference type="GeneTree" id="ENSGT00390000016050"/>
<dbReference type="HOGENOM" id="CLU_056118_0_0_1"/>
<dbReference type="InParanoid" id="Q9NX45"/>
<dbReference type="OMA" id="THCITDL"/>
<dbReference type="OrthoDB" id="9948648at2759"/>
<dbReference type="PAN-GO" id="Q9NX45">
    <property type="GO annotations" value="5 GO annotations based on evolutionary models"/>
</dbReference>
<dbReference type="PhylomeDB" id="Q9NX45"/>
<dbReference type="TreeFam" id="TF336841"/>
<dbReference type="PathwayCommons" id="Q9NX45"/>
<dbReference type="SignaLink" id="Q9NX45"/>
<dbReference type="SIGNOR" id="Q9NX45"/>
<dbReference type="BioGRID-ORCS" id="100526761">
    <property type="hits" value="9 hits in 1008 CRISPR screens"/>
</dbReference>
<dbReference type="BioGRID-ORCS" id="54937">
    <property type="hits" value="45 hits in 823 CRISPR screens"/>
</dbReference>
<dbReference type="Pharos" id="Q9NX45">
    <property type="development level" value="Tbio"/>
</dbReference>
<dbReference type="PRO" id="PR:Q9NX45"/>
<dbReference type="Proteomes" id="UP000005640">
    <property type="component" value="Chromosome 13"/>
</dbReference>
<dbReference type="RNAct" id="Q9NX45">
    <property type="molecule type" value="protein"/>
</dbReference>
<dbReference type="Bgee" id="ENSG00000120669">
    <property type="expression patterns" value="Expressed in secondary oocyte and 106 other cell types or tissues"/>
</dbReference>
<dbReference type="GO" id="GO:0000785">
    <property type="term" value="C:chromatin"/>
    <property type="evidence" value="ECO:0000247"/>
    <property type="project" value="NTNU_SB"/>
</dbReference>
<dbReference type="GO" id="GO:0005737">
    <property type="term" value="C:cytoplasm"/>
    <property type="evidence" value="ECO:0007669"/>
    <property type="project" value="UniProtKB-SubCell"/>
</dbReference>
<dbReference type="GO" id="GO:0005634">
    <property type="term" value="C:nucleus"/>
    <property type="evidence" value="ECO:0000318"/>
    <property type="project" value="GO_Central"/>
</dbReference>
<dbReference type="GO" id="GO:0000981">
    <property type="term" value="F:DNA-binding transcription factor activity, RNA polymerase II-specific"/>
    <property type="evidence" value="ECO:0000247"/>
    <property type="project" value="NTNU_SB"/>
</dbReference>
<dbReference type="GO" id="GO:0046982">
    <property type="term" value="F:protein heterodimerization activity"/>
    <property type="evidence" value="ECO:0000250"/>
    <property type="project" value="UniProtKB"/>
</dbReference>
<dbReference type="GO" id="GO:0042803">
    <property type="term" value="F:protein homodimerization activity"/>
    <property type="evidence" value="ECO:0000250"/>
    <property type="project" value="UniProtKB"/>
</dbReference>
<dbReference type="GO" id="GO:0000978">
    <property type="term" value="F:RNA polymerase II cis-regulatory region sequence-specific DNA binding"/>
    <property type="evidence" value="ECO:0000318"/>
    <property type="project" value="GO_Central"/>
</dbReference>
<dbReference type="GO" id="GO:1990837">
    <property type="term" value="F:sequence-specific double-stranded DNA binding"/>
    <property type="evidence" value="ECO:0000314"/>
    <property type="project" value="ARUK-UCL"/>
</dbReference>
<dbReference type="GO" id="GO:0030154">
    <property type="term" value="P:cell differentiation"/>
    <property type="evidence" value="ECO:0000250"/>
    <property type="project" value="UniProtKB"/>
</dbReference>
<dbReference type="GO" id="GO:0009994">
    <property type="term" value="P:oocyte differentiation"/>
    <property type="evidence" value="ECO:0000250"/>
    <property type="project" value="UniProtKB"/>
</dbReference>
<dbReference type="GO" id="GO:0006357">
    <property type="term" value="P:regulation of transcription by RNA polymerase II"/>
    <property type="evidence" value="ECO:0000318"/>
    <property type="project" value="GO_Central"/>
</dbReference>
<dbReference type="GO" id="GO:0007283">
    <property type="term" value="P:spermatogenesis"/>
    <property type="evidence" value="ECO:0000250"/>
    <property type="project" value="UniProtKB"/>
</dbReference>
<dbReference type="CDD" id="cd18908">
    <property type="entry name" value="bHLH_SOHLH1_2"/>
    <property type="match status" value="1"/>
</dbReference>
<dbReference type="FunFam" id="4.10.280.10:FF:000071">
    <property type="entry name" value="spermatogenesis- and oogenesis-specific basic helix-loop-helix-containing protein 2"/>
    <property type="match status" value="1"/>
</dbReference>
<dbReference type="Gene3D" id="4.10.280.10">
    <property type="entry name" value="Helix-loop-helix DNA-binding domain"/>
    <property type="match status" value="1"/>
</dbReference>
<dbReference type="InterPro" id="IPR011598">
    <property type="entry name" value="bHLH_dom"/>
</dbReference>
<dbReference type="InterPro" id="IPR036638">
    <property type="entry name" value="HLH_DNA-bd_sf"/>
</dbReference>
<dbReference type="InterPro" id="IPR039583">
    <property type="entry name" value="TCFL5/SOLH1/2"/>
</dbReference>
<dbReference type="PANTHER" id="PTHR15402:SF2">
    <property type="entry name" value="TRANSCRIPTION FACTOR LIKE 5"/>
    <property type="match status" value="1"/>
</dbReference>
<dbReference type="PANTHER" id="PTHR15402">
    <property type="entry name" value="TRANSCRIPTION FACTOR-LIKE 5 PROTEIN"/>
    <property type="match status" value="1"/>
</dbReference>
<dbReference type="Pfam" id="PF00010">
    <property type="entry name" value="HLH"/>
    <property type="match status" value="1"/>
</dbReference>
<dbReference type="SMART" id="SM00353">
    <property type="entry name" value="HLH"/>
    <property type="match status" value="1"/>
</dbReference>
<dbReference type="SUPFAM" id="SSF47459">
    <property type="entry name" value="HLH, helix-loop-helix DNA-binding domain"/>
    <property type="match status" value="1"/>
</dbReference>
<dbReference type="PROSITE" id="PS50888">
    <property type="entry name" value="BHLH"/>
    <property type="match status" value="1"/>
</dbReference>
<evidence type="ECO:0000250" key="1">
    <source>
        <dbReference type="UniProtKB" id="Q6IUP1"/>
    </source>
</evidence>
<evidence type="ECO:0000250" key="2">
    <source>
        <dbReference type="UniProtKB" id="Q9D489"/>
    </source>
</evidence>
<evidence type="ECO:0000255" key="3">
    <source>
        <dbReference type="PROSITE-ProRule" id="PRU00981"/>
    </source>
</evidence>
<evidence type="ECO:0000303" key="4">
    <source>
    </source>
</evidence>
<evidence type="ECO:0000303" key="5">
    <source>
    </source>
</evidence>
<evidence type="ECO:0000305" key="6"/>
<protein>
    <recommendedName>
        <fullName>Spermatogenesis- and oogenesis-specific basic helix-loop-helix-containing protein 2</fullName>
    </recommendedName>
</protein>
<proteinExistence type="evidence at protein level"/>
<comment type="function">
    <text evidence="1 2">Transcription regulator of both male and female germline differentiation. Suppresses genes involved in spermatogonial stem cells maintenance, and induces genes important for spermatogonial differentiation. Coordinates oocyte differentiation without affecting meiosis I (By similarity).</text>
</comment>
<comment type="subunit">
    <text evidence="2">Forms both hetero- and homodimers with SOHLH1.</text>
</comment>
<comment type="subcellular location">
    <subcellularLocation>
        <location evidence="2 3">Nucleus</location>
    </subcellularLocation>
    <subcellularLocation>
        <location evidence="2">Cytoplasm</location>
    </subcellularLocation>
    <text evidence="2">Translocates from the cytoplasm into the nucleus and the translocation is dependent on SOHLH1 expression.</text>
</comment>
<comment type="alternative products">
    <event type="alternative splicing"/>
    <isoform>
        <id>Q9NX45-1</id>
        <name>1</name>
        <sequence type="displayed"/>
    </isoform>
    <isoform>
        <id>Q9NX45-2</id>
        <name>2</name>
        <sequence type="described" ref="VSP_030652 VSP_030653"/>
    </isoform>
    <isoform>
        <id>Q9NX45-3</id>
        <name>3</name>
        <sequence type="described" ref="VSP_042423"/>
    </isoform>
</comment>
<reference key="1">
    <citation type="journal article" date="2004" name="Nat. Genet.">
        <title>Complete sequencing and characterization of 21,243 full-length human cDNAs.</title>
        <authorList>
            <person name="Ota T."/>
            <person name="Suzuki Y."/>
            <person name="Nishikawa T."/>
            <person name="Otsuki T."/>
            <person name="Sugiyama T."/>
            <person name="Irie R."/>
            <person name="Wakamatsu A."/>
            <person name="Hayashi K."/>
            <person name="Sato H."/>
            <person name="Nagai K."/>
            <person name="Kimura K."/>
            <person name="Makita H."/>
            <person name="Sekine M."/>
            <person name="Obayashi M."/>
            <person name="Nishi T."/>
            <person name="Shibahara T."/>
            <person name="Tanaka T."/>
            <person name="Ishii S."/>
            <person name="Yamamoto J."/>
            <person name="Saito K."/>
            <person name="Kawai Y."/>
            <person name="Isono Y."/>
            <person name="Nakamura Y."/>
            <person name="Nagahari K."/>
            <person name="Murakami K."/>
            <person name="Yasuda T."/>
            <person name="Iwayanagi T."/>
            <person name="Wagatsuma M."/>
            <person name="Shiratori A."/>
            <person name="Sudo H."/>
            <person name="Hosoiri T."/>
            <person name="Kaku Y."/>
            <person name="Kodaira H."/>
            <person name="Kondo H."/>
            <person name="Sugawara M."/>
            <person name="Takahashi M."/>
            <person name="Kanda K."/>
            <person name="Yokoi T."/>
            <person name="Furuya T."/>
            <person name="Kikkawa E."/>
            <person name="Omura Y."/>
            <person name="Abe K."/>
            <person name="Kamihara K."/>
            <person name="Katsuta N."/>
            <person name="Sato K."/>
            <person name="Tanikawa M."/>
            <person name="Yamazaki M."/>
            <person name="Ninomiya K."/>
            <person name="Ishibashi T."/>
            <person name="Yamashita H."/>
            <person name="Murakawa K."/>
            <person name="Fujimori K."/>
            <person name="Tanai H."/>
            <person name="Kimata M."/>
            <person name="Watanabe M."/>
            <person name="Hiraoka S."/>
            <person name="Chiba Y."/>
            <person name="Ishida S."/>
            <person name="Ono Y."/>
            <person name="Takiguchi S."/>
            <person name="Watanabe S."/>
            <person name="Yosida M."/>
            <person name="Hotuta T."/>
            <person name="Kusano J."/>
            <person name="Kanehori K."/>
            <person name="Takahashi-Fujii A."/>
            <person name="Hara H."/>
            <person name="Tanase T.-O."/>
            <person name="Nomura Y."/>
            <person name="Togiya S."/>
            <person name="Komai F."/>
            <person name="Hara R."/>
            <person name="Takeuchi K."/>
            <person name="Arita M."/>
            <person name="Imose N."/>
            <person name="Musashino K."/>
            <person name="Yuuki H."/>
            <person name="Oshima A."/>
            <person name="Sasaki N."/>
            <person name="Aotsuka S."/>
            <person name="Yoshikawa Y."/>
            <person name="Matsunawa H."/>
            <person name="Ichihara T."/>
            <person name="Shiohata N."/>
            <person name="Sano S."/>
            <person name="Moriya S."/>
            <person name="Momiyama H."/>
            <person name="Satoh N."/>
            <person name="Takami S."/>
            <person name="Terashima Y."/>
            <person name="Suzuki O."/>
            <person name="Nakagawa S."/>
            <person name="Senoh A."/>
            <person name="Mizoguchi H."/>
            <person name="Goto Y."/>
            <person name="Shimizu F."/>
            <person name="Wakebe H."/>
            <person name="Hishigaki H."/>
            <person name="Watanabe T."/>
            <person name="Sugiyama A."/>
            <person name="Takemoto M."/>
            <person name="Kawakami B."/>
            <person name="Yamazaki M."/>
            <person name="Watanabe K."/>
            <person name="Kumagai A."/>
            <person name="Itakura S."/>
            <person name="Fukuzumi Y."/>
            <person name="Fujimori Y."/>
            <person name="Komiyama M."/>
            <person name="Tashiro H."/>
            <person name="Tanigami A."/>
            <person name="Fujiwara T."/>
            <person name="Ono T."/>
            <person name="Yamada K."/>
            <person name="Fujii Y."/>
            <person name="Ozaki K."/>
            <person name="Hirao M."/>
            <person name="Ohmori Y."/>
            <person name="Kawabata A."/>
            <person name="Hikiji T."/>
            <person name="Kobatake N."/>
            <person name="Inagaki H."/>
            <person name="Ikema Y."/>
            <person name="Okamoto S."/>
            <person name="Okitani R."/>
            <person name="Kawakami T."/>
            <person name="Noguchi S."/>
            <person name="Itoh T."/>
            <person name="Shigeta K."/>
            <person name="Senba T."/>
            <person name="Matsumura K."/>
            <person name="Nakajima Y."/>
            <person name="Mizuno T."/>
            <person name="Morinaga M."/>
            <person name="Sasaki M."/>
            <person name="Togashi T."/>
            <person name="Oyama M."/>
            <person name="Hata H."/>
            <person name="Watanabe M."/>
            <person name="Komatsu T."/>
            <person name="Mizushima-Sugano J."/>
            <person name="Satoh T."/>
            <person name="Shirai Y."/>
            <person name="Takahashi Y."/>
            <person name="Nakagawa K."/>
            <person name="Okumura K."/>
            <person name="Nagase T."/>
            <person name="Nomura N."/>
            <person name="Kikuchi H."/>
            <person name="Masuho Y."/>
            <person name="Yamashita R."/>
            <person name="Nakai K."/>
            <person name="Yada T."/>
            <person name="Nakamura Y."/>
            <person name="Ohara O."/>
            <person name="Isogai T."/>
            <person name="Sugano S."/>
        </authorList>
    </citation>
    <scope>NUCLEOTIDE SEQUENCE [LARGE SCALE MRNA] (ISOFORMS 1 AND 3)</scope>
    <source>
        <tissue>Testis</tissue>
    </source>
</reference>
<reference key="2">
    <citation type="journal article" date="2004" name="Nature">
        <title>The DNA sequence and analysis of human chromosome 13.</title>
        <authorList>
            <person name="Dunham A."/>
            <person name="Matthews L.H."/>
            <person name="Burton J."/>
            <person name="Ashurst J.L."/>
            <person name="Howe K.L."/>
            <person name="Ashcroft K.J."/>
            <person name="Beare D.M."/>
            <person name="Burford D.C."/>
            <person name="Hunt S.E."/>
            <person name="Griffiths-Jones S."/>
            <person name="Jones M.C."/>
            <person name="Keenan S.J."/>
            <person name="Oliver K."/>
            <person name="Scott C.E."/>
            <person name="Ainscough R."/>
            <person name="Almeida J.P."/>
            <person name="Ambrose K.D."/>
            <person name="Andrews D.T."/>
            <person name="Ashwell R.I.S."/>
            <person name="Babbage A.K."/>
            <person name="Bagguley C.L."/>
            <person name="Bailey J."/>
            <person name="Bannerjee R."/>
            <person name="Barlow K.F."/>
            <person name="Bates K."/>
            <person name="Beasley H."/>
            <person name="Bird C.P."/>
            <person name="Bray-Allen S."/>
            <person name="Brown A.J."/>
            <person name="Brown J.Y."/>
            <person name="Burrill W."/>
            <person name="Carder C."/>
            <person name="Carter N.P."/>
            <person name="Chapman J.C."/>
            <person name="Clamp M.E."/>
            <person name="Clark S.Y."/>
            <person name="Clarke G."/>
            <person name="Clee C.M."/>
            <person name="Clegg S.C."/>
            <person name="Cobley V."/>
            <person name="Collins J.E."/>
            <person name="Corby N."/>
            <person name="Coville G.J."/>
            <person name="Deloukas P."/>
            <person name="Dhami P."/>
            <person name="Dunham I."/>
            <person name="Dunn M."/>
            <person name="Earthrowl M.E."/>
            <person name="Ellington A.G."/>
            <person name="Faulkner L."/>
            <person name="Frankish A.G."/>
            <person name="Frankland J."/>
            <person name="French L."/>
            <person name="Garner P."/>
            <person name="Garnett J."/>
            <person name="Gilbert J.G.R."/>
            <person name="Gilson C.J."/>
            <person name="Ghori J."/>
            <person name="Grafham D.V."/>
            <person name="Gribble S.M."/>
            <person name="Griffiths C."/>
            <person name="Hall R.E."/>
            <person name="Hammond S."/>
            <person name="Harley J.L."/>
            <person name="Hart E.A."/>
            <person name="Heath P.D."/>
            <person name="Howden P.J."/>
            <person name="Huckle E.J."/>
            <person name="Hunt P.J."/>
            <person name="Hunt A.R."/>
            <person name="Johnson C."/>
            <person name="Johnson D."/>
            <person name="Kay M."/>
            <person name="Kimberley A.M."/>
            <person name="King A."/>
            <person name="Laird G.K."/>
            <person name="Langford C.J."/>
            <person name="Lawlor S."/>
            <person name="Leongamornlert D.A."/>
            <person name="Lloyd D.M."/>
            <person name="Lloyd C."/>
            <person name="Loveland J.E."/>
            <person name="Lovell J."/>
            <person name="Martin S."/>
            <person name="Mashreghi-Mohammadi M."/>
            <person name="McLaren S.J."/>
            <person name="McMurray A."/>
            <person name="Milne S."/>
            <person name="Moore M.J.F."/>
            <person name="Nickerson T."/>
            <person name="Palmer S.A."/>
            <person name="Pearce A.V."/>
            <person name="Peck A.I."/>
            <person name="Pelan S."/>
            <person name="Phillimore B."/>
            <person name="Porter K.M."/>
            <person name="Rice C.M."/>
            <person name="Searle S."/>
            <person name="Sehra H.K."/>
            <person name="Shownkeen R."/>
            <person name="Skuce C.D."/>
            <person name="Smith M."/>
            <person name="Steward C.A."/>
            <person name="Sycamore N."/>
            <person name="Tester J."/>
            <person name="Thomas D.W."/>
            <person name="Tracey A."/>
            <person name="Tromans A."/>
            <person name="Tubby B."/>
            <person name="Wall M."/>
            <person name="Wallis J.M."/>
            <person name="West A.P."/>
            <person name="Whitehead S.L."/>
            <person name="Willey D.L."/>
            <person name="Wilming L."/>
            <person name="Wray P.W."/>
            <person name="Wright M.W."/>
            <person name="Young L."/>
            <person name="Coulson A."/>
            <person name="Durbin R.M."/>
            <person name="Hubbard T."/>
            <person name="Sulston J.E."/>
            <person name="Beck S."/>
            <person name="Bentley D.R."/>
            <person name="Rogers J."/>
            <person name="Ross M.T."/>
        </authorList>
    </citation>
    <scope>NUCLEOTIDE SEQUENCE [LARGE SCALE GENOMIC DNA]</scope>
</reference>
<reference key="3">
    <citation type="submission" date="2005-07" db="EMBL/GenBank/DDBJ databases">
        <authorList>
            <person name="Mural R.J."/>
            <person name="Istrail S."/>
            <person name="Sutton G.G."/>
            <person name="Florea L."/>
            <person name="Halpern A.L."/>
            <person name="Mobarry C.M."/>
            <person name="Lippert R."/>
            <person name="Walenz B."/>
            <person name="Shatkay H."/>
            <person name="Dew I."/>
            <person name="Miller J.R."/>
            <person name="Flanigan M.J."/>
            <person name="Edwards N.J."/>
            <person name="Bolanos R."/>
            <person name="Fasulo D."/>
            <person name="Halldorsson B.V."/>
            <person name="Hannenhalli S."/>
            <person name="Turner R."/>
            <person name="Yooseph S."/>
            <person name="Lu F."/>
            <person name="Nusskern D.R."/>
            <person name="Shue B.C."/>
            <person name="Zheng X.H."/>
            <person name="Zhong F."/>
            <person name="Delcher A.L."/>
            <person name="Huson D.H."/>
            <person name="Kravitz S.A."/>
            <person name="Mouchard L."/>
            <person name="Reinert K."/>
            <person name="Remington K.A."/>
            <person name="Clark A.G."/>
            <person name="Waterman M.S."/>
            <person name="Eichler E.E."/>
            <person name="Adams M.D."/>
            <person name="Hunkapiller M.W."/>
            <person name="Myers E.W."/>
            <person name="Venter J.C."/>
        </authorList>
    </citation>
    <scope>NUCLEOTIDE SEQUENCE [LARGE SCALE GENOMIC DNA]</scope>
</reference>
<reference key="4">
    <citation type="journal article" date="2004" name="Genome Res.">
        <title>The status, quality, and expansion of the NIH full-length cDNA project: the Mammalian Gene Collection (MGC).</title>
        <authorList>
            <consortium name="The MGC Project Team"/>
        </authorList>
    </citation>
    <scope>NUCLEOTIDE SEQUENCE [LARGE SCALE MRNA] (ISOFORM 2)</scope>
    <source>
        <tissue>Testis</tissue>
    </source>
</reference>
<reference key="5">
    <citation type="submission" date="2005-01" db="EMBL/GenBank/DDBJ databases">
        <title>Identification and functional characterization of two novel bHLH family members.</title>
        <authorList>
            <person name="Smas C.M."/>
        </authorList>
    </citation>
    <scope>NUCLEOTIDE SEQUENCE [MRNA] OF 24-425 (ISOFORM 1)</scope>
</reference>
<gene>
    <name type="primary">SOHLH2</name>
    <name type="synonym">TEB1</name>
</gene>
<sequence length="425" mass="46941">MASSIICQEHCQISGQAKIDILLVGDVTVGYLADTVQKLFANIAEVTITISDTKEAAALLDDCIFNMVLLKVPSSLSAEELEAIKLIRFGKKKNTHSLFVFIIPENFKGCISGHGMDIALTEPLTMEKMSNVVKYWTTCPSNTVKTENATGPEELGLPLQRSYSEHLGYFPTDLFACSESLRNGNGLELNASLSEFEKNKKISLLHSSKEKLRRERIKYCCEQLRTLLPYVKGRKNDAASVLEATVDYVKYIREKISPAVMAQITEALQSNMRFCKKQQTPIELSLPGTVMAQRENSVMSTYSPERGLQFLTNTCWNGCSTPDAESSLDEAVRVPSSSASENAIGDPYKTHISSAALSLNSLHTVRYYSKVTPSYDATAVTNQNISIHLPSAMPPVSKLLPRHCTSGLGQTCTTHPNCLQQFWAY</sequence>
<accession>Q9NX45</accession>
<accession>B4DX90</accession>
<accession>Q5EGC3</accession>
<accession>Q8TC74</accession>
<accession>Q96QX4</accession>